<comment type="function">
    <text evidence="1">Site-specific tyrosine recombinase, which acts by catalyzing the cutting and rejoining of the recombining DNA molecules. The XerC-XerD complex is essential to convert dimers of the bacterial chromosome into monomers to permit their segregation at cell division. It also contributes to the segregational stability of plasmids.</text>
</comment>
<comment type="subunit">
    <text evidence="1">Forms a cyclic heterotetrameric complex composed of two molecules of XerC and two molecules of XerD.</text>
</comment>
<comment type="subcellular location">
    <subcellularLocation>
        <location evidence="1">Cytoplasm</location>
    </subcellularLocation>
</comment>
<comment type="similarity">
    <text evidence="1">Belongs to the 'phage' integrase family. XerC subfamily.</text>
</comment>
<feature type="chain" id="PRO_1000088244" description="Tyrosine recombinase XerC">
    <location>
        <begin position="1"/>
        <end position="298"/>
    </location>
</feature>
<feature type="domain" description="Core-binding (CB)" evidence="3">
    <location>
        <begin position="1"/>
        <end position="84"/>
    </location>
</feature>
<feature type="domain" description="Tyr recombinase" evidence="2">
    <location>
        <begin position="105"/>
        <end position="286"/>
    </location>
</feature>
<feature type="active site" evidence="1">
    <location>
        <position position="145"/>
    </location>
</feature>
<feature type="active site" evidence="1">
    <location>
        <position position="169"/>
    </location>
</feature>
<feature type="active site" evidence="1">
    <location>
        <position position="238"/>
    </location>
</feature>
<feature type="active site" evidence="1">
    <location>
        <position position="241"/>
    </location>
</feature>
<feature type="active site" evidence="1">
    <location>
        <position position="264"/>
    </location>
</feature>
<feature type="active site" description="O-(3'-phospho-DNA)-tyrosine intermediate" evidence="1">
    <location>
        <position position="273"/>
    </location>
</feature>
<proteinExistence type="inferred from homology"/>
<keyword id="KW-0131">Cell cycle</keyword>
<keyword id="KW-0132">Cell division</keyword>
<keyword id="KW-0159">Chromosome partition</keyword>
<keyword id="KW-0963">Cytoplasm</keyword>
<keyword id="KW-0229">DNA integration</keyword>
<keyword id="KW-0233">DNA recombination</keyword>
<keyword id="KW-0238">DNA-binding</keyword>
<name>XERC_STAA2</name>
<organism>
    <name type="scientific">Staphylococcus aureus (strain JH1)</name>
    <dbReference type="NCBI Taxonomy" id="359787"/>
    <lineage>
        <taxon>Bacteria</taxon>
        <taxon>Bacillati</taxon>
        <taxon>Bacillota</taxon>
        <taxon>Bacilli</taxon>
        <taxon>Bacillales</taxon>
        <taxon>Staphylococcaceae</taxon>
        <taxon>Staphylococcus</taxon>
    </lineage>
</organism>
<dbReference type="EMBL" id="CP000736">
    <property type="protein sequence ID" value="ABR52188.1"/>
    <property type="molecule type" value="Genomic_DNA"/>
</dbReference>
<dbReference type="SMR" id="A6U170"/>
<dbReference type="KEGG" id="sah:SaurJH1_1337"/>
<dbReference type="HOGENOM" id="CLU_027562_9_0_9"/>
<dbReference type="GO" id="GO:0005737">
    <property type="term" value="C:cytoplasm"/>
    <property type="evidence" value="ECO:0007669"/>
    <property type="project" value="UniProtKB-SubCell"/>
</dbReference>
<dbReference type="GO" id="GO:0003677">
    <property type="term" value="F:DNA binding"/>
    <property type="evidence" value="ECO:0007669"/>
    <property type="project" value="UniProtKB-KW"/>
</dbReference>
<dbReference type="GO" id="GO:0009037">
    <property type="term" value="F:tyrosine-based site-specific recombinase activity"/>
    <property type="evidence" value="ECO:0007669"/>
    <property type="project" value="UniProtKB-UniRule"/>
</dbReference>
<dbReference type="GO" id="GO:0051301">
    <property type="term" value="P:cell division"/>
    <property type="evidence" value="ECO:0007669"/>
    <property type="project" value="UniProtKB-KW"/>
</dbReference>
<dbReference type="GO" id="GO:0007059">
    <property type="term" value="P:chromosome segregation"/>
    <property type="evidence" value="ECO:0007669"/>
    <property type="project" value="UniProtKB-UniRule"/>
</dbReference>
<dbReference type="GO" id="GO:0006313">
    <property type="term" value="P:DNA transposition"/>
    <property type="evidence" value="ECO:0007669"/>
    <property type="project" value="UniProtKB-UniRule"/>
</dbReference>
<dbReference type="CDD" id="cd00798">
    <property type="entry name" value="INT_XerDC_C"/>
    <property type="match status" value="1"/>
</dbReference>
<dbReference type="Gene3D" id="1.10.150.130">
    <property type="match status" value="1"/>
</dbReference>
<dbReference type="Gene3D" id="1.10.443.10">
    <property type="entry name" value="Intergrase catalytic core"/>
    <property type="match status" value="1"/>
</dbReference>
<dbReference type="HAMAP" id="MF_01808">
    <property type="entry name" value="Recomb_XerC_XerD"/>
    <property type="match status" value="1"/>
</dbReference>
<dbReference type="InterPro" id="IPR044068">
    <property type="entry name" value="CB"/>
</dbReference>
<dbReference type="InterPro" id="IPR011010">
    <property type="entry name" value="DNA_brk_join_enz"/>
</dbReference>
<dbReference type="InterPro" id="IPR013762">
    <property type="entry name" value="Integrase-like_cat_sf"/>
</dbReference>
<dbReference type="InterPro" id="IPR002104">
    <property type="entry name" value="Integrase_catalytic"/>
</dbReference>
<dbReference type="InterPro" id="IPR010998">
    <property type="entry name" value="Integrase_recombinase_N"/>
</dbReference>
<dbReference type="InterPro" id="IPR004107">
    <property type="entry name" value="Integrase_SAM-like_N"/>
</dbReference>
<dbReference type="InterPro" id="IPR011931">
    <property type="entry name" value="Recomb_XerC"/>
</dbReference>
<dbReference type="InterPro" id="IPR023009">
    <property type="entry name" value="Tyrosine_recombinase_XerC/XerD"/>
</dbReference>
<dbReference type="InterPro" id="IPR050090">
    <property type="entry name" value="Tyrosine_recombinase_XerCD"/>
</dbReference>
<dbReference type="NCBIfam" id="NF001399">
    <property type="entry name" value="PRK00283.1"/>
    <property type="match status" value="1"/>
</dbReference>
<dbReference type="NCBIfam" id="NF040815">
    <property type="entry name" value="recomb_XerA_Arch"/>
    <property type="match status" value="1"/>
</dbReference>
<dbReference type="NCBIfam" id="TIGR02224">
    <property type="entry name" value="recomb_XerC"/>
    <property type="match status" value="1"/>
</dbReference>
<dbReference type="PANTHER" id="PTHR30349">
    <property type="entry name" value="PHAGE INTEGRASE-RELATED"/>
    <property type="match status" value="1"/>
</dbReference>
<dbReference type="PANTHER" id="PTHR30349:SF77">
    <property type="entry name" value="TYROSINE RECOMBINASE XERC"/>
    <property type="match status" value="1"/>
</dbReference>
<dbReference type="Pfam" id="PF02899">
    <property type="entry name" value="Phage_int_SAM_1"/>
    <property type="match status" value="1"/>
</dbReference>
<dbReference type="Pfam" id="PF00589">
    <property type="entry name" value="Phage_integrase"/>
    <property type="match status" value="1"/>
</dbReference>
<dbReference type="SUPFAM" id="SSF56349">
    <property type="entry name" value="DNA breaking-rejoining enzymes"/>
    <property type="match status" value="1"/>
</dbReference>
<dbReference type="PROSITE" id="PS51900">
    <property type="entry name" value="CB"/>
    <property type="match status" value="1"/>
</dbReference>
<dbReference type="PROSITE" id="PS51898">
    <property type="entry name" value="TYR_RECOMBINASE"/>
    <property type="match status" value="1"/>
</dbReference>
<gene>
    <name evidence="1" type="primary">xerC</name>
    <name type="ordered locus">SaurJH1_1337</name>
</gene>
<accession>A6U170</accession>
<reference key="1">
    <citation type="submission" date="2007-06" db="EMBL/GenBank/DDBJ databases">
        <title>Complete sequence of chromosome of Staphylococcus aureus subsp. aureus JH1.</title>
        <authorList>
            <consortium name="US DOE Joint Genome Institute"/>
            <person name="Copeland A."/>
            <person name="Lucas S."/>
            <person name="Lapidus A."/>
            <person name="Barry K."/>
            <person name="Detter J.C."/>
            <person name="Glavina del Rio T."/>
            <person name="Hammon N."/>
            <person name="Israni S."/>
            <person name="Dalin E."/>
            <person name="Tice H."/>
            <person name="Pitluck S."/>
            <person name="Chain P."/>
            <person name="Malfatti S."/>
            <person name="Shin M."/>
            <person name="Vergez L."/>
            <person name="Schmutz J."/>
            <person name="Larimer F."/>
            <person name="Land M."/>
            <person name="Hauser L."/>
            <person name="Kyrpides N."/>
            <person name="Ivanova N."/>
            <person name="Tomasz A."/>
            <person name="Richardson P."/>
        </authorList>
    </citation>
    <scope>NUCLEOTIDE SEQUENCE [LARGE SCALE GENOMIC DNA]</scope>
    <source>
        <strain>JH1</strain>
    </source>
</reference>
<evidence type="ECO:0000255" key="1">
    <source>
        <dbReference type="HAMAP-Rule" id="MF_01808"/>
    </source>
</evidence>
<evidence type="ECO:0000255" key="2">
    <source>
        <dbReference type="PROSITE-ProRule" id="PRU01246"/>
    </source>
</evidence>
<evidence type="ECO:0000255" key="3">
    <source>
        <dbReference type="PROSITE-ProRule" id="PRU01248"/>
    </source>
</evidence>
<sequence length="298" mass="35166">MNHIQEAFLNTLKVERNFSEHTLKSYQDDLIQFNQFLEQEHLQLKTFEYRDARNYLSYLYSNHLKRTSVSRKISTLRTFYEYWMTLDENIINPFVQLVHPKKEKYLPQFFYEEEMEALFKTVEEDTSKNLRDRVILELLYATGIRVSELVNIKKQDIDFYANGVTVLGKGSKERFVPFGAYCRQSIENYLEHFKPIQSCNHDFLILNMKGEAITERGVRYVLNDIVKRTAGVSEIHPHKLRHTFATHLLNQGADLRTVQSLLGHVNLSTTGKYTHVSNQQLRKVYLNAHPRAKKENEI</sequence>
<protein>
    <recommendedName>
        <fullName evidence="1">Tyrosine recombinase XerC</fullName>
    </recommendedName>
</protein>